<name>DNAJ_STRA3</name>
<comment type="function">
    <text evidence="1">Participates actively in the response to hyperosmotic and heat shock by preventing the aggregation of stress-denatured proteins and by disaggregating proteins, also in an autonomous, DnaK-independent fashion. Unfolded proteins bind initially to DnaJ; upon interaction with the DnaJ-bound protein, DnaK hydrolyzes its bound ATP, resulting in the formation of a stable complex. GrpE releases ADP from DnaK; ATP binding to DnaK triggers the release of the substrate protein, thus completing the reaction cycle. Several rounds of ATP-dependent interactions between DnaJ, DnaK and GrpE are required for fully efficient folding. Also involved, together with DnaK and GrpE, in the DNA replication of plasmids through activation of initiation proteins.</text>
</comment>
<comment type="cofactor">
    <cofactor evidence="1">
        <name>Zn(2+)</name>
        <dbReference type="ChEBI" id="CHEBI:29105"/>
    </cofactor>
    <text evidence="1">Binds 2 Zn(2+) ions per monomer.</text>
</comment>
<comment type="subunit">
    <text evidence="1">Homodimer.</text>
</comment>
<comment type="subcellular location">
    <subcellularLocation>
        <location evidence="1">Cytoplasm</location>
    </subcellularLocation>
</comment>
<comment type="domain">
    <text evidence="1">The J domain is necessary and sufficient to stimulate DnaK ATPase activity. Zinc center 1 plays an important role in the autonomous, DnaK-independent chaperone activity of DnaJ. Zinc center 2 is essential for interaction with DnaK and for DnaJ activity.</text>
</comment>
<comment type="similarity">
    <text evidence="1">Belongs to the DnaJ family.</text>
</comment>
<gene>
    <name evidence="1" type="primary">dnaJ</name>
    <name type="ordered locus">gbs0097</name>
</gene>
<feature type="chain" id="PRO_0000070891" description="Chaperone protein DnaJ">
    <location>
        <begin position="1"/>
        <end position="379"/>
    </location>
</feature>
<feature type="domain" description="J" evidence="1">
    <location>
        <begin position="5"/>
        <end position="69"/>
    </location>
</feature>
<feature type="repeat" description="CXXCXGXG motif">
    <location>
        <begin position="148"/>
        <end position="155"/>
    </location>
</feature>
<feature type="repeat" description="CXXCXGXG motif">
    <location>
        <begin position="165"/>
        <end position="172"/>
    </location>
</feature>
<feature type="repeat" description="CXXCXGXG motif">
    <location>
        <begin position="191"/>
        <end position="198"/>
    </location>
</feature>
<feature type="repeat" description="CXXCXGXG motif">
    <location>
        <begin position="205"/>
        <end position="212"/>
    </location>
</feature>
<feature type="zinc finger region" description="CR-type" evidence="1">
    <location>
        <begin position="135"/>
        <end position="217"/>
    </location>
</feature>
<feature type="binding site" evidence="1">
    <location>
        <position position="148"/>
    </location>
    <ligand>
        <name>Zn(2+)</name>
        <dbReference type="ChEBI" id="CHEBI:29105"/>
        <label>1</label>
    </ligand>
</feature>
<feature type="binding site" evidence="1">
    <location>
        <position position="151"/>
    </location>
    <ligand>
        <name>Zn(2+)</name>
        <dbReference type="ChEBI" id="CHEBI:29105"/>
        <label>1</label>
    </ligand>
</feature>
<feature type="binding site" evidence="1">
    <location>
        <position position="165"/>
    </location>
    <ligand>
        <name>Zn(2+)</name>
        <dbReference type="ChEBI" id="CHEBI:29105"/>
        <label>2</label>
    </ligand>
</feature>
<feature type="binding site" evidence="1">
    <location>
        <position position="168"/>
    </location>
    <ligand>
        <name>Zn(2+)</name>
        <dbReference type="ChEBI" id="CHEBI:29105"/>
        <label>2</label>
    </ligand>
</feature>
<feature type="binding site" evidence="1">
    <location>
        <position position="191"/>
    </location>
    <ligand>
        <name>Zn(2+)</name>
        <dbReference type="ChEBI" id="CHEBI:29105"/>
        <label>2</label>
    </ligand>
</feature>
<feature type="binding site" evidence="1">
    <location>
        <position position="194"/>
    </location>
    <ligand>
        <name>Zn(2+)</name>
        <dbReference type="ChEBI" id="CHEBI:29105"/>
        <label>2</label>
    </ligand>
</feature>
<feature type="binding site" evidence="1">
    <location>
        <position position="205"/>
    </location>
    <ligand>
        <name>Zn(2+)</name>
        <dbReference type="ChEBI" id="CHEBI:29105"/>
        <label>1</label>
    </ligand>
</feature>
<feature type="binding site" evidence="1">
    <location>
        <position position="208"/>
    </location>
    <ligand>
        <name>Zn(2+)</name>
        <dbReference type="ChEBI" id="CHEBI:29105"/>
        <label>1</label>
    </ligand>
</feature>
<dbReference type="EMBL" id="AL766843">
    <property type="protein sequence ID" value="CAD45742.1"/>
    <property type="molecule type" value="Genomic_DNA"/>
</dbReference>
<dbReference type="RefSeq" id="WP_001066286.1">
    <property type="nucleotide sequence ID" value="NC_004368.1"/>
</dbReference>
<dbReference type="SMR" id="Q8E7Q7"/>
<dbReference type="KEGG" id="san:dnaJ"/>
<dbReference type="eggNOG" id="COG0484">
    <property type="taxonomic scope" value="Bacteria"/>
</dbReference>
<dbReference type="HOGENOM" id="CLU_017633_0_0_9"/>
<dbReference type="Proteomes" id="UP000000823">
    <property type="component" value="Chromosome"/>
</dbReference>
<dbReference type="GO" id="GO:0005737">
    <property type="term" value="C:cytoplasm"/>
    <property type="evidence" value="ECO:0007669"/>
    <property type="project" value="UniProtKB-SubCell"/>
</dbReference>
<dbReference type="GO" id="GO:0005524">
    <property type="term" value="F:ATP binding"/>
    <property type="evidence" value="ECO:0007669"/>
    <property type="project" value="InterPro"/>
</dbReference>
<dbReference type="GO" id="GO:0031072">
    <property type="term" value="F:heat shock protein binding"/>
    <property type="evidence" value="ECO:0007669"/>
    <property type="project" value="InterPro"/>
</dbReference>
<dbReference type="GO" id="GO:0051082">
    <property type="term" value="F:unfolded protein binding"/>
    <property type="evidence" value="ECO:0007669"/>
    <property type="project" value="UniProtKB-UniRule"/>
</dbReference>
<dbReference type="GO" id="GO:0008270">
    <property type="term" value="F:zinc ion binding"/>
    <property type="evidence" value="ECO:0007669"/>
    <property type="project" value="UniProtKB-UniRule"/>
</dbReference>
<dbReference type="GO" id="GO:0051085">
    <property type="term" value="P:chaperone cofactor-dependent protein refolding"/>
    <property type="evidence" value="ECO:0007669"/>
    <property type="project" value="TreeGrafter"/>
</dbReference>
<dbReference type="GO" id="GO:0006260">
    <property type="term" value="P:DNA replication"/>
    <property type="evidence" value="ECO:0007669"/>
    <property type="project" value="UniProtKB-KW"/>
</dbReference>
<dbReference type="GO" id="GO:0042026">
    <property type="term" value="P:protein refolding"/>
    <property type="evidence" value="ECO:0007669"/>
    <property type="project" value="TreeGrafter"/>
</dbReference>
<dbReference type="GO" id="GO:0009408">
    <property type="term" value="P:response to heat"/>
    <property type="evidence" value="ECO:0007669"/>
    <property type="project" value="InterPro"/>
</dbReference>
<dbReference type="CDD" id="cd06257">
    <property type="entry name" value="DnaJ"/>
    <property type="match status" value="1"/>
</dbReference>
<dbReference type="CDD" id="cd10747">
    <property type="entry name" value="DnaJ_C"/>
    <property type="match status" value="1"/>
</dbReference>
<dbReference type="CDD" id="cd10719">
    <property type="entry name" value="DnaJ_zf"/>
    <property type="match status" value="1"/>
</dbReference>
<dbReference type="FunFam" id="1.10.287.110:FF:000031">
    <property type="entry name" value="Molecular chaperone DnaJ"/>
    <property type="match status" value="1"/>
</dbReference>
<dbReference type="FunFam" id="2.10.230.10:FF:000002">
    <property type="entry name" value="Molecular chaperone DnaJ"/>
    <property type="match status" value="1"/>
</dbReference>
<dbReference type="FunFam" id="2.60.260.20:FF:000004">
    <property type="entry name" value="Molecular chaperone DnaJ"/>
    <property type="match status" value="1"/>
</dbReference>
<dbReference type="Gene3D" id="1.10.287.110">
    <property type="entry name" value="DnaJ domain"/>
    <property type="match status" value="1"/>
</dbReference>
<dbReference type="Gene3D" id="2.10.230.10">
    <property type="entry name" value="Heat shock protein DnaJ, cysteine-rich domain"/>
    <property type="match status" value="1"/>
</dbReference>
<dbReference type="Gene3D" id="2.60.260.20">
    <property type="entry name" value="Urease metallochaperone UreE, N-terminal domain"/>
    <property type="match status" value="2"/>
</dbReference>
<dbReference type="HAMAP" id="MF_01152">
    <property type="entry name" value="DnaJ"/>
    <property type="match status" value="1"/>
</dbReference>
<dbReference type="InterPro" id="IPR012724">
    <property type="entry name" value="DnaJ"/>
</dbReference>
<dbReference type="InterPro" id="IPR002939">
    <property type="entry name" value="DnaJ_C"/>
</dbReference>
<dbReference type="InterPro" id="IPR001623">
    <property type="entry name" value="DnaJ_domain"/>
</dbReference>
<dbReference type="InterPro" id="IPR018253">
    <property type="entry name" value="DnaJ_domain_CS"/>
</dbReference>
<dbReference type="InterPro" id="IPR008971">
    <property type="entry name" value="HSP40/DnaJ_pept-bd"/>
</dbReference>
<dbReference type="InterPro" id="IPR001305">
    <property type="entry name" value="HSP_DnaJ_Cys-rich_dom"/>
</dbReference>
<dbReference type="InterPro" id="IPR036410">
    <property type="entry name" value="HSP_DnaJ_Cys-rich_dom_sf"/>
</dbReference>
<dbReference type="InterPro" id="IPR036869">
    <property type="entry name" value="J_dom_sf"/>
</dbReference>
<dbReference type="NCBIfam" id="TIGR02349">
    <property type="entry name" value="DnaJ_bact"/>
    <property type="match status" value="1"/>
</dbReference>
<dbReference type="NCBIfam" id="NF008035">
    <property type="entry name" value="PRK10767.1"/>
    <property type="match status" value="1"/>
</dbReference>
<dbReference type="NCBIfam" id="NF010869">
    <property type="entry name" value="PRK14276.1"/>
    <property type="match status" value="1"/>
</dbReference>
<dbReference type="NCBIfam" id="NF010873">
    <property type="entry name" value="PRK14280.1"/>
    <property type="match status" value="1"/>
</dbReference>
<dbReference type="PANTHER" id="PTHR43096:SF48">
    <property type="entry name" value="CHAPERONE PROTEIN DNAJ"/>
    <property type="match status" value="1"/>
</dbReference>
<dbReference type="PANTHER" id="PTHR43096">
    <property type="entry name" value="DNAJ HOMOLOG 1, MITOCHONDRIAL-RELATED"/>
    <property type="match status" value="1"/>
</dbReference>
<dbReference type="Pfam" id="PF00226">
    <property type="entry name" value="DnaJ"/>
    <property type="match status" value="1"/>
</dbReference>
<dbReference type="Pfam" id="PF01556">
    <property type="entry name" value="DnaJ_C"/>
    <property type="match status" value="1"/>
</dbReference>
<dbReference type="Pfam" id="PF00684">
    <property type="entry name" value="DnaJ_CXXCXGXG"/>
    <property type="match status" value="1"/>
</dbReference>
<dbReference type="PRINTS" id="PR00625">
    <property type="entry name" value="JDOMAIN"/>
</dbReference>
<dbReference type="SMART" id="SM00271">
    <property type="entry name" value="DnaJ"/>
    <property type="match status" value="1"/>
</dbReference>
<dbReference type="SUPFAM" id="SSF46565">
    <property type="entry name" value="Chaperone J-domain"/>
    <property type="match status" value="1"/>
</dbReference>
<dbReference type="SUPFAM" id="SSF57938">
    <property type="entry name" value="DnaJ/Hsp40 cysteine-rich domain"/>
    <property type="match status" value="1"/>
</dbReference>
<dbReference type="SUPFAM" id="SSF49493">
    <property type="entry name" value="HSP40/DnaJ peptide-binding domain"/>
    <property type="match status" value="2"/>
</dbReference>
<dbReference type="PROSITE" id="PS00636">
    <property type="entry name" value="DNAJ_1"/>
    <property type="match status" value="1"/>
</dbReference>
<dbReference type="PROSITE" id="PS50076">
    <property type="entry name" value="DNAJ_2"/>
    <property type="match status" value="1"/>
</dbReference>
<dbReference type="PROSITE" id="PS51188">
    <property type="entry name" value="ZF_CR"/>
    <property type="match status" value="1"/>
</dbReference>
<sequence>MNNTEFYDRLGVSKDASQDEIKKAYRRMSKKYHPDINKETGAEEKYKEVQEAYETLSDTQKRAAYDQYGAAGANGGFGGFDGGGFGGFDGGGFGGFEDIFSSFFGGGGMRNPNAPRQGDDLQYRVNLSFEEAIFGAEKEVSYNRESSCHTCSGSGAKPGTSPVTCQKCHGSGVINVDTQTPLGTMRRQVTCDVCQGSGQEIKEKCPTCHGTGHEKKTHKVSVKIPAGVETGQQIRLTGQGEAGFNGGPYGDLFVIINVLPSQQFERNGSTIYYTLKISFVQAALGDTIDIPTVHGAVEMSIPAGTQTGKTFRLRGKGAPKLRGGGQGDQHVTVNIVTPTKLNDAQKEALHAFAEASGDKMVHPKKKGFFDKVKDALDVD</sequence>
<protein>
    <recommendedName>
        <fullName evidence="1">Chaperone protein DnaJ</fullName>
    </recommendedName>
</protein>
<proteinExistence type="inferred from homology"/>
<keyword id="KW-0143">Chaperone</keyword>
<keyword id="KW-0963">Cytoplasm</keyword>
<keyword id="KW-0235">DNA replication</keyword>
<keyword id="KW-0479">Metal-binding</keyword>
<keyword id="KW-0677">Repeat</keyword>
<keyword id="KW-0346">Stress response</keyword>
<keyword id="KW-0862">Zinc</keyword>
<keyword id="KW-0863">Zinc-finger</keyword>
<reference key="1">
    <citation type="journal article" date="2002" name="Mol. Microbiol.">
        <title>Genome sequence of Streptococcus agalactiae, a pathogen causing invasive neonatal disease.</title>
        <authorList>
            <person name="Glaser P."/>
            <person name="Rusniok C."/>
            <person name="Buchrieser C."/>
            <person name="Chevalier F."/>
            <person name="Frangeul L."/>
            <person name="Msadek T."/>
            <person name="Zouine M."/>
            <person name="Couve E."/>
            <person name="Lalioui L."/>
            <person name="Poyart C."/>
            <person name="Trieu-Cuot P."/>
            <person name="Kunst F."/>
        </authorList>
    </citation>
    <scope>NUCLEOTIDE SEQUENCE [LARGE SCALE GENOMIC DNA]</scope>
    <source>
        <strain>NEM316</strain>
    </source>
</reference>
<accession>Q8E7Q7</accession>
<evidence type="ECO:0000255" key="1">
    <source>
        <dbReference type="HAMAP-Rule" id="MF_01152"/>
    </source>
</evidence>
<organism>
    <name type="scientific">Streptococcus agalactiae serotype III (strain NEM316)</name>
    <dbReference type="NCBI Taxonomy" id="211110"/>
    <lineage>
        <taxon>Bacteria</taxon>
        <taxon>Bacillati</taxon>
        <taxon>Bacillota</taxon>
        <taxon>Bacilli</taxon>
        <taxon>Lactobacillales</taxon>
        <taxon>Streptococcaceae</taxon>
        <taxon>Streptococcus</taxon>
    </lineage>
</organism>